<proteinExistence type="inferred from homology"/>
<sequence>MAMTVHCDIVSAEGEIFSGLVEMVVAHGELGDLGIALGHAPLITNLKPGPIRLIKQGGEAEVFYISGGFLEVQPNMVKVLADTVQRAADLDEASAQEAVKAAEKALNEKGADFDYGSAAARLAEAAAQLRTVQQIRKKFGG</sequence>
<evidence type="ECO:0000255" key="1">
    <source>
        <dbReference type="HAMAP-Rule" id="MF_00530"/>
    </source>
</evidence>
<protein>
    <recommendedName>
        <fullName evidence="1">ATP synthase epsilon chain</fullName>
    </recommendedName>
    <alternativeName>
        <fullName evidence="1">ATP synthase F1 sector epsilon subunit</fullName>
    </alternativeName>
    <alternativeName>
        <fullName evidence="1">F-ATPase epsilon subunit</fullName>
    </alternativeName>
</protein>
<organism>
    <name type="scientific">Pseudomonas fluorescens (strain ATCC BAA-477 / NRRL B-23932 / Pf-5)</name>
    <dbReference type="NCBI Taxonomy" id="220664"/>
    <lineage>
        <taxon>Bacteria</taxon>
        <taxon>Pseudomonadati</taxon>
        <taxon>Pseudomonadota</taxon>
        <taxon>Gammaproteobacteria</taxon>
        <taxon>Pseudomonadales</taxon>
        <taxon>Pseudomonadaceae</taxon>
        <taxon>Pseudomonas</taxon>
    </lineage>
</organism>
<name>ATPE_PSEF5</name>
<reference key="1">
    <citation type="journal article" date="2005" name="Nat. Biotechnol.">
        <title>Complete genome sequence of the plant commensal Pseudomonas fluorescens Pf-5.</title>
        <authorList>
            <person name="Paulsen I.T."/>
            <person name="Press C.M."/>
            <person name="Ravel J."/>
            <person name="Kobayashi D.Y."/>
            <person name="Myers G.S.A."/>
            <person name="Mavrodi D.V."/>
            <person name="DeBoy R.T."/>
            <person name="Seshadri R."/>
            <person name="Ren Q."/>
            <person name="Madupu R."/>
            <person name="Dodson R.J."/>
            <person name="Durkin A.S."/>
            <person name="Brinkac L.M."/>
            <person name="Daugherty S.C."/>
            <person name="Sullivan S.A."/>
            <person name="Rosovitz M.J."/>
            <person name="Gwinn M.L."/>
            <person name="Zhou L."/>
            <person name="Schneider D.J."/>
            <person name="Cartinhour S.W."/>
            <person name="Nelson W.C."/>
            <person name="Weidman J."/>
            <person name="Watkins K."/>
            <person name="Tran K."/>
            <person name="Khouri H."/>
            <person name="Pierson E.A."/>
            <person name="Pierson L.S. III"/>
            <person name="Thomashow L.S."/>
            <person name="Loper J.E."/>
        </authorList>
    </citation>
    <scope>NUCLEOTIDE SEQUENCE [LARGE SCALE GENOMIC DNA]</scope>
    <source>
        <strain>ATCC BAA-477 / NRRL B-23932 / Pf-5</strain>
    </source>
</reference>
<keyword id="KW-0066">ATP synthesis</keyword>
<keyword id="KW-0997">Cell inner membrane</keyword>
<keyword id="KW-1003">Cell membrane</keyword>
<keyword id="KW-0139">CF(1)</keyword>
<keyword id="KW-0375">Hydrogen ion transport</keyword>
<keyword id="KW-0406">Ion transport</keyword>
<keyword id="KW-0472">Membrane</keyword>
<keyword id="KW-0813">Transport</keyword>
<accession>Q4K3B0</accession>
<gene>
    <name evidence="1" type="primary">atpC</name>
    <name type="ordered locus">PFL_6215</name>
</gene>
<feature type="chain" id="PRO_0000265862" description="ATP synthase epsilon chain">
    <location>
        <begin position="1"/>
        <end position="141"/>
    </location>
</feature>
<comment type="function">
    <text evidence="1">Produces ATP from ADP in the presence of a proton gradient across the membrane.</text>
</comment>
<comment type="subunit">
    <text>F-type ATPases have 2 components, CF(1) - the catalytic core - and CF(0) - the membrane proton channel. CF(1) has five subunits: alpha(3), beta(3), gamma(1), delta(1), epsilon(1). CF(0) has three main subunits: a, b and c.</text>
</comment>
<comment type="subcellular location">
    <subcellularLocation>
        <location evidence="1">Cell inner membrane</location>
        <topology evidence="1">Peripheral membrane protein</topology>
    </subcellularLocation>
</comment>
<comment type="similarity">
    <text evidence="1">Belongs to the ATPase epsilon chain family.</text>
</comment>
<dbReference type="EMBL" id="CP000076">
    <property type="protein sequence ID" value="AAY95403.1"/>
    <property type="molecule type" value="Genomic_DNA"/>
</dbReference>
<dbReference type="RefSeq" id="WP_011064380.1">
    <property type="nucleotide sequence ID" value="NC_004129.6"/>
</dbReference>
<dbReference type="SMR" id="Q4K3B0"/>
<dbReference type="STRING" id="220664.PFL_6215"/>
<dbReference type="KEGG" id="pfl:PFL_6215"/>
<dbReference type="PATRIC" id="fig|220664.5.peg.6345"/>
<dbReference type="eggNOG" id="COG0355">
    <property type="taxonomic scope" value="Bacteria"/>
</dbReference>
<dbReference type="HOGENOM" id="CLU_084338_2_0_6"/>
<dbReference type="Proteomes" id="UP000008540">
    <property type="component" value="Chromosome"/>
</dbReference>
<dbReference type="GO" id="GO:0005886">
    <property type="term" value="C:plasma membrane"/>
    <property type="evidence" value="ECO:0007669"/>
    <property type="project" value="UniProtKB-SubCell"/>
</dbReference>
<dbReference type="GO" id="GO:0045259">
    <property type="term" value="C:proton-transporting ATP synthase complex"/>
    <property type="evidence" value="ECO:0007669"/>
    <property type="project" value="UniProtKB-KW"/>
</dbReference>
<dbReference type="GO" id="GO:0005524">
    <property type="term" value="F:ATP binding"/>
    <property type="evidence" value="ECO:0007669"/>
    <property type="project" value="UniProtKB-UniRule"/>
</dbReference>
<dbReference type="GO" id="GO:0046933">
    <property type="term" value="F:proton-transporting ATP synthase activity, rotational mechanism"/>
    <property type="evidence" value="ECO:0007669"/>
    <property type="project" value="UniProtKB-UniRule"/>
</dbReference>
<dbReference type="CDD" id="cd12152">
    <property type="entry name" value="F1-ATPase_delta"/>
    <property type="match status" value="1"/>
</dbReference>
<dbReference type="FunFam" id="2.60.15.10:FF:000001">
    <property type="entry name" value="ATP synthase epsilon chain"/>
    <property type="match status" value="1"/>
</dbReference>
<dbReference type="Gene3D" id="1.20.5.440">
    <property type="entry name" value="ATP synthase delta/epsilon subunit, C-terminal domain"/>
    <property type="match status" value="1"/>
</dbReference>
<dbReference type="Gene3D" id="2.60.15.10">
    <property type="entry name" value="F0F1 ATP synthase delta/epsilon subunit, N-terminal"/>
    <property type="match status" value="1"/>
</dbReference>
<dbReference type="HAMAP" id="MF_00530">
    <property type="entry name" value="ATP_synth_epsil_bac"/>
    <property type="match status" value="1"/>
</dbReference>
<dbReference type="InterPro" id="IPR036794">
    <property type="entry name" value="ATP_F1_dsu/esu_C_sf"/>
</dbReference>
<dbReference type="InterPro" id="IPR001469">
    <property type="entry name" value="ATP_synth_F1_dsu/esu"/>
</dbReference>
<dbReference type="InterPro" id="IPR020546">
    <property type="entry name" value="ATP_synth_F1_dsu/esu_N"/>
</dbReference>
<dbReference type="InterPro" id="IPR020547">
    <property type="entry name" value="ATP_synth_F1_esu_C"/>
</dbReference>
<dbReference type="InterPro" id="IPR036771">
    <property type="entry name" value="ATPsynth_dsu/esu_N"/>
</dbReference>
<dbReference type="NCBIfam" id="TIGR01216">
    <property type="entry name" value="ATP_synt_epsi"/>
    <property type="match status" value="1"/>
</dbReference>
<dbReference type="NCBIfam" id="NF001847">
    <property type="entry name" value="PRK00571.1-4"/>
    <property type="match status" value="1"/>
</dbReference>
<dbReference type="PANTHER" id="PTHR13822">
    <property type="entry name" value="ATP SYNTHASE DELTA/EPSILON CHAIN"/>
    <property type="match status" value="1"/>
</dbReference>
<dbReference type="PANTHER" id="PTHR13822:SF10">
    <property type="entry name" value="ATP SYNTHASE EPSILON CHAIN, CHLOROPLASTIC"/>
    <property type="match status" value="1"/>
</dbReference>
<dbReference type="Pfam" id="PF00401">
    <property type="entry name" value="ATP-synt_DE"/>
    <property type="match status" value="1"/>
</dbReference>
<dbReference type="Pfam" id="PF02823">
    <property type="entry name" value="ATP-synt_DE_N"/>
    <property type="match status" value="1"/>
</dbReference>
<dbReference type="SUPFAM" id="SSF46604">
    <property type="entry name" value="Epsilon subunit of F1F0-ATP synthase C-terminal domain"/>
    <property type="match status" value="1"/>
</dbReference>
<dbReference type="SUPFAM" id="SSF51344">
    <property type="entry name" value="Epsilon subunit of F1F0-ATP synthase N-terminal domain"/>
    <property type="match status" value="1"/>
</dbReference>